<reference key="1">
    <citation type="journal article" date="1992" name="J. Bacteriol.">
        <title>Identification and sequences of the lipopolysaccharide core biosynthetic genes rfaQ, rfaP, and rfaG of Escherichia coli K-12.</title>
        <authorList>
            <person name="Parker C.T."/>
            <person name="Pradel E."/>
            <person name="Schnaitman C.A."/>
        </authorList>
    </citation>
    <scope>NUCLEOTIDE SEQUENCE [GENOMIC DNA]</scope>
    <source>
        <strain>K12</strain>
    </source>
</reference>
<reference key="2">
    <citation type="journal article" date="1992" name="J. Bacteriol.">
        <title>The gene coding for 3-deoxy-manno-octulosonic acid transferase and the rfaQ gene are transcribed from divergently arranged promoters in Escherichia coli.</title>
        <authorList>
            <person name="Clementz T."/>
        </authorList>
    </citation>
    <scope>NUCLEOTIDE SEQUENCE [GENOMIC DNA]</scope>
    <source>
        <strain>K12</strain>
    </source>
</reference>
<reference key="3">
    <citation type="journal article" date="1994" name="Nucleic Acids Res.">
        <title>Analysis of the Escherichia coli genome. V. DNA sequence of the region from 76.0 to 81.5 minutes.</title>
        <authorList>
            <person name="Sofia H.J."/>
            <person name="Burland V."/>
            <person name="Daniels D.L."/>
            <person name="Plunkett G. III"/>
            <person name="Blattner F.R."/>
        </authorList>
    </citation>
    <scope>NUCLEOTIDE SEQUENCE [LARGE SCALE GENOMIC DNA]</scope>
    <source>
        <strain>K12 / MG1655 / ATCC 47076</strain>
    </source>
</reference>
<reference key="4">
    <citation type="journal article" date="1997" name="Science">
        <title>The complete genome sequence of Escherichia coli K-12.</title>
        <authorList>
            <person name="Blattner F.R."/>
            <person name="Plunkett G. III"/>
            <person name="Bloch C.A."/>
            <person name="Perna N.T."/>
            <person name="Burland V."/>
            <person name="Riley M."/>
            <person name="Collado-Vides J."/>
            <person name="Glasner J.D."/>
            <person name="Rode C.K."/>
            <person name="Mayhew G.F."/>
            <person name="Gregor J."/>
            <person name="Davis N.W."/>
            <person name="Kirkpatrick H.A."/>
            <person name="Goeden M.A."/>
            <person name="Rose D.J."/>
            <person name="Mau B."/>
            <person name="Shao Y."/>
        </authorList>
    </citation>
    <scope>NUCLEOTIDE SEQUENCE [LARGE SCALE GENOMIC DNA]</scope>
    <source>
        <strain>K12 / MG1655 / ATCC 47076</strain>
    </source>
</reference>
<reference key="5">
    <citation type="journal article" date="2006" name="Mol. Syst. Biol.">
        <title>Highly accurate genome sequences of Escherichia coli K-12 strains MG1655 and W3110.</title>
        <authorList>
            <person name="Hayashi K."/>
            <person name="Morooka N."/>
            <person name="Yamamoto Y."/>
            <person name="Fujita K."/>
            <person name="Isono K."/>
            <person name="Choi S."/>
            <person name="Ohtsubo E."/>
            <person name="Baba T."/>
            <person name="Wanner B.L."/>
            <person name="Mori H."/>
            <person name="Horiuchi T."/>
        </authorList>
    </citation>
    <scope>NUCLEOTIDE SEQUENCE [LARGE SCALE GENOMIC DNA]</scope>
    <source>
        <strain>K12 / W3110 / ATCC 27325 / DSM 5911</strain>
    </source>
</reference>
<reference key="6">
    <citation type="journal article" date="1996" name="Trends Microbiol.">
        <title>Bacterial polysaccharide synthesis and gene nomenclature.</title>
        <authorList>
            <person name="Reeves P.R."/>
            <person name="Hobbs M."/>
            <person name="Valvano M.A."/>
            <person name="Skurnik M."/>
            <person name="Whitfield C."/>
            <person name="Coplin D."/>
            <person name="Kido N."/>
            <person name="Klena J."/>
            <person name="Maskell D."/>
            <person name="Raetz C.R.H."/>
            <person name="Rick P.D."/>
        </authorList>
    </citation>
    <scope>NOMENCLATURE</scope>
</reference>
<reference key="7">
    <citation type="journal article" date="2003" name="Infect. Immun.">
        <title>An Escherichia coli MG1655 lipopolysaccharide deep-rough core mutant grows and survives in mouse cecal mucus but fails to colonize the mouse large intestine.</title>
        <authorList>
            <person name="Moeller A.K."/>
            <person name="Leatham M.P."/>
            <person name="Conway T."/>
            <person name="Nuijten P.J."/>
            <person name="de Haan L.A."/>
            <person name="Krogfelt K.A."/>
            <person name="Cohen P.S."/>
        </authorList>
    </citation>
    <scope>DISRUPTION PHENOTYPE</scope>
    <source>
        <strain>K12 / MG1655 / ATCC 47076</strain>
    </source>
</reference>
<reference key="8">
    <citation type="journal article" date="2015" name="FEBS Lett.">
        <title>Cloning and characterization of the Escherichia coli Heptosyltransferase III: Exploring substrate specificity in lipopolysaccharide core biosynthesis.</title>
        <authorList>
            <person name="Mudapaka J."/>
            <person name="Taylor E.A."/>
        </authorList>
    </citation>
    <scope>FUNCTION</scope>
    <scope>CATALYTIC ACTIVITY</scope>
    <scope>BIOPHYSICOCHEMICAL PROPERTIES</scope>
    <scope>PATHWAY</scope>
    <source>
        <strain>K12</strain>
    </source>
</reference>
<name>WAAQ_ECOLI</name>
<dbReference type="EC" id="2.4.99.25" evidence="2"/>
<dbReference type="EMBL" id="M80599">
    <property type="protein sequence ID" value="AAA24081.1"/>
    <property type="molecule type" value="Genomic_DNA"/>
</dbReference>
<dbReference type="EMBL" id="M86305">
    <property type="protein sequence ID" value="AAA03744.1"/>
    <property type="molecule type" value="Genomic_DNA"/>
</dbReference>
<dbReference type="EMBL" id="U00039">
    <property type="protein sequence ID" value="AAB18609.1"/>
    <property type="molecule type" value="Genomic_DNA"/>
</dbReference>
<dbReference type="EMBL" id="U00096">
    <property type="protein sequence ID" value="AAC76656.1"/>
    <property type="molecule type" value="Genomic_DNA"/>
</dbReference>
<dbReference type="EMBL" id="AP009048">
    <property type="protein sequence ID" value="BAE77660.1"/>
    <property type="molecule type" value="Genomic_DNA"/>
</dbReference>
<dbReference type="PIR" id="S27560">
    <property type="entry name" value="S27560"/>
</dbReference>
<dbReference type="RefSeq" id="NP_418089.1">
    <property type="nucleotide sequence ID" value="NC_000913.3"/>
</dbReference>
<dbReference type="SMR" id="P25742"/>
<dbReference type="BioGRID" id="4259595">
    <property type="interactions" value="231"/>
</dbReference>
<dbReference type="DIP" id="DIP-10675N"/>
<dbReference type="FunCoup" id="P25742">
    <property type="interactions" value="128"/>
</dbReference>
<dbReference type="IntAct" id="P25742">
    <property type="interactions" value="2"/>
</dbReference>
<dbReference type="STRING" id="511145.b3632"/>
<dbReference type="CAZy" id="GT9">
    <property type="family name" value="Glycosyltransferase Family 9"/>
</dbReference>
<dbReference type="jPOST" id="P25742"/>
<dbReference type="PaxDb" id="511145-b3632"/>
<dbReference type="EnsemblBacteria" id="AAC76656">
    <property type="protein sequence ID" value="AAC76656"/>
    <property type="gene ID" value="b3632"/>
</dbReference>
<dbReference type="GeneID" id="948155"/>
<dbReference type="KEGG" id="ecj:JW3607"/>
<dbReference type="KEGG" id="eco:b3632"/>
<dbReference type="KEGG" id="ecoc:C3026_19685"/>
<dbReference type="PATRIC" id="fig|511145.12.peg.3752"/>
<dbReference type="EchoBASE" id="EB1317"/>
<dbReference type="eggNOG" id="COG0859">
    <property type="taxonomic scope" value="Bacteria"/>
</dbReference>
<dbReference type="HOGENOM" id="CLU_038371_3_2_6"/>
<dbReference type="InParanoid" id="P25742"/>
<dbReference type="OMA" id="HMAVTQG"/>
<dbReference type="PhylomeDB" id="P25742"/>
<dbReference type="BioCyc" id="EcoCyc:EG11341-MONOMER"/>
<dbReference type="BioCyc" id="MetaCyc:EG11341-MONOMER"/>
<dbReference type="BRENDA" id="2.4.99.B9">
    <property type="organism ID" value="2026"/>
</dbReference>
<dbReference type="UniPathway" id="UPA00958"/>
<dbReference type="PRO" id="PR:P25742"/>
<dbReference type="Proteomes" id="UP000000625">
    <property type="component" value="Chromosome"/>
</dbReference>
<dbReference type="GO" id="GO:0005829">
    <property type="term" value="C:cytosol"/>
    <property type="evidence" value="ECO:0000318"/>
    <property type="project" value="GO_Central"/>
</dbReference>
<dbReference type="GO" id="GO:0008713">
    <property type="term" value="F:ADP-heptose-lipopolysaccharide heptosyltransferase activity"/>
    <property type="evidence" value="ECO:0000318"/>
    <property type="project" value="GO_Central"/>
</dbReference>
<dbReference type="GO" id="GO:0071967">
    <property type="term" value="F:lipopolysaccharide core heptosyltransferase activity"/>
    <property type="evidence" value="ECO:0000314"/>
    <property type="project" value="EcoCyc"/>
</dbReference>
<dbReference type="GO" id="GO:0009244">
    <property type="term" value="P:lipopolysaccharide core region biosynthetic process"/>
    <property type="evidence" value="ECO:0000315"/>
    <property type="project" value="EcoCyc"/>
</dbReference>
<dbReference type="CDD" id="cd03789">
    <property type="entry name" value="GT9_LPS_heptosyltransferase"/>
    <property type="match status" value="1"/>
</dbReference>
<dbReference type="FunFam" id="3.40.50.2000:FF:000191">
    <property type="entry name" value="Lipopolysaccharide core heptosyltransferase RfaQ"/>
    <property type="match status" value="1"/>
</dbReference>
<dbReference type="Gene3D" id="3.40.50.2000">
    <property type="entry name" value="Glycogen Phosphorylase B"/>
    <property type="match status" value="2"/>
</dbReference>
<dbReference type="InterPro" id="IPR002201">
    <property type="entry name" value="Glyco_trans_9"/>
</dbReference>
<dbReference type="InterPro" id="IPR011916">
    <property type="entry name" value="LipoPS_heptosylTferase-III"/>
</dbReference>
<dbReference type="InterPro" id="IPR051199">
    <property type="entry name" value="LPS_LOS_Heptosyltrfase"/>
</dbReference>
<dbReference type="NCBIfam" id="TIGR02201">
    <property type="entry name" value="heptsyl_trn_III"/>
    <property type="match status" value="1"/>
</dbReference>
<dbReference type="NCBIfam" id="NF007742">
    <property type="entry name" value="PRK10422.1"/>
    <property type="match status" value="1"/>
</dbReference>
<dbReference type="PANTHER" id="PTHR30160:SF1">
    <property type="entry name" value="LIPOPOLYSACCHARIDE 1,2-N-ACETYLGLUCOSAMINETRANSFERASE-RELATED"/>
    <property type="match status" value="1"/>
</dbReference>
<dbReference type="PANTHER" id="PTHR30160">
    <property type="entry name" value="TETRAACYLDISACCHARIDE 4'-KINASE-RELATED"/>
    <property type="match status" value="1"/>
</dbReference>
<dbReference type="Pfam" id="PF01075">
    <property type="entry name" value="Glyco_transf_9"/>
    <property type="match status" value="1"/>
</dbReference>
<dbReference type="SUPFAM" id="SSF53756">
    <property type="entry name" value="UDP-Glycosyltransferase/glycogen phosphorylase"/>
    <property type="match status" value="1"/>
</dbReference>
<protein>
    <recommendedName>
        <fullName evidence="6">Lipopolysaccharide heptosyltransferase 3</fullName>
        <ecNumber evidence="2">2.4.99.25</ecNumber>
    </recommendedName>
    <alternativeName>
        <fullName evidence="6">ADP-heptose:lipopolysaccharide heptosyltransferase III</fullName>
        <shortName evidence="6">ADP-heptose:LPS heptosyltransferase III</shortName>
        <shortName evidence="4">Heptosyltransferase III</shortName>
    </alternativeName>
</protein>
<sequence length="344" mass="38731">MRYHGDMLLTTPVISTLKQNYPDAKIDMLLYQDTIPILSENPEINALYGISNKGAGTFDKIKNVLSLIKTLRANNYDLVINLTDQWMVALLVRCLPARMKISQLYGHRQHGIWKKSFTHLAPIHGTHIVERNLSVLEPLGITDFYTDTTMSYAEDCWKKMRRELDALGVKDHYVVIQPTARQIFKCWDNDKFSKVIDALQQRGYQVVLTCGPSADDLACVDEIARGCETKPITGLAGKTRFPELGALIDHAVLFIGVDSAPGHIAAAVKTPVISLFGATDHVFWRPWTENIIQFWAGNYQKMPTRHELDRNKKYLSVIPAEDVIAATEKLLPEDAPSADRNAQL</sequence>
<keyword id="KW-0328">Glycosyltransferase</keyword>
<keyword id="KW-0448">Lipopolysaccharide biosynthesis</keyword>
<keyword id="KW-1185">Reference proteome</keyword>
<keyword id="KW-0808">Transferase</keyword>
<feature type="chain" id="PRO_0000207265" description="Lipopolysaccharide heptosyltransferase 3">
    <location>
        <begin position="1"/>
        <end position="344"/>
    </location>
</feature>
<gene>
    <name evidence="5" type="primary">waaQ</name>
    <name evidence="3" type="synonym">rfaQ</name>
    <name type="ordered locus">b3632</name>
    <name type="ordered locus">JW3607</name>
</gene>
<comment type="function">
    <text evidence="2">Glycosyltransferase involved in the biosynthesis of the core oligosaccharide region of lipopolysaccharide (LPS) (PubMed:25957775). Catalyzes the addition of the third heptose unit (HepIII) to the second heptose unit (HepII) of the phospho-Hep2-Kdo2-lipid A module (PubMed:25957775).</text>
</comment>
<comment type="catalytic activity">
    <reaction evidence="2">
        <text>an L-alpha-D-Hep-(1-&gt;3)-4-O-phospho-L-alpha-D-Hep-(1-&gt;5)-[alpha-Kdo-(2-&gt;4)]-alpha-Kdo-(2-&gt;6)-lipid A + ADP-L-glycero-beta-D-manno-heptose = an L-alpha-D-Hep-(1-&gt;7)-L-alpha-D-Hep-(1-&gt;3)-4-O-phospho-L-alpha-D-Hep-(1-&gt;5)-[alpha-Kdo-(2-&gt;4)]-alpha-Kdo-(2-&gt;6)-lipid A + ADP + H(+)</text>
        <dbReference type="Rhea" id="RHEA:74095"/>
        <dbReference type="ChEBI" id="CHEBI:15378"/>
        <dbReference type="ChEBI" id="CHEBI:61506"/>
        <dbReference type="ChEBI" id="CHEBI:193070"/>
        <dbReference type="ChEBI" id="CHEBI:193071"/>
        <dbReference type="ChEBI" id="CHEBI:456216"/>
        <dbReference type="EC" id="2.4.99.25"/>
    </reaction>
</comment>
<comment type="catalytic activity">
    <reaction evidence="2">
        <text>L-alpha-D-Hep-(1-&gt;3)-4-O-phospho-L-alpha-D-Hep-(1-&gt;5)-[alpha-Kdo-(2-&gt;4)]-alpha-Kdo-(2-&gt;6)-lipid A (E. coli) + ADP-L-glycero-beta-D-manno-heptose = L-alpha-D-Hep-(1-&gt;7)-L-alpha-D-Hep-(1-&gt;3)-4-O-phospho-L-alpha-D-Hep-(1-&gt;5)-[alpha-Kdo-(2-&gt;4)]-alpha-Kdo-(2-&gt;6)-lipid A (E. coli) + ADP + H(+)</text>
        <dbReference type="Rhea" id="RHEA:74099"/>
        <dbReference type="ChEBI" id="CHEBI:15378"/>
        <dbReference type="ChEBI" id="CHEBI:61506"/>
        <dbReference type="ChEBI" id="CHEBI:193075"/>
        <dbReference type="ChEBI" id="CHEBI:193076"/>
        <dbReference type="ChEBI" id="CHEBI:456216"/>
        <dbReference type="EC" id="2.4.99.25"/>
    </reaction>
</comment>
<comment type="biophysicochemical properties">
    <kinetics>
        <KM evidence="2">10 uM for phospho-Hep2-Kdo2-lipid A</KM>
        <KM evidence="2">0.6 uM for O-deacylated phospho-Hep2-Kdo2-lipid A</KM>
        <KM evidence="2">10 uM for fully deacylated phospho-Hep2-Kdo2-lipid A</KM>
        <text evidence="2">kcat is 0.41 sec(-1) with phospho-Hep2-Kdo2-lipid A as substrate. kcat is 0.028 sec(-1) with O-deacylated phospho-Hep2-Kdo2-lipid A. kcat is 0.07 sec(-1) with fully deacylated phospho-Hep2-Kdo2-lipid A.</text>
    </kinetics>
</comment>
<comment type="pathway">
    <text evidence="2">Bacterial outer membrane biogenesis; LPS core biosynthesis.</text>
</comment>
<comment type="disruption phenotype">
    <text evidence="1">Disruption of the gene, which likely inactivates the entire waa operon due to downstream polarity, leads to a mutant (MD42) that grows and survives in vitro in undiluted, highly viscous cecal mucus isolated directly from the mouse cecum, but is unable to colonize the mouse large intestine (PubMed:12654836). Mutant MD42 is hypersensitive to sodium dodecyl sulfate (SDS), bile salts and the hydrophobic antibiotic novobiocin (PubMed:12654836). Furthermore, its LPS core oligosaccharide is truncated (PubMed:12654836).</text>
</comment>
<comment type="similarity">
    <text evidence="6">Belongs to the glycosyltransferase 9 family.</text>
</comment>
<accession>P25742</accession>
<accession>Q2M7U6</accession>
<proteinExistence type="evidence at protein level"/>
<organism>
    <name type="scientific">Escherichia coli (strain K12)</name>
    <dbReference type="NCBI Taxonomy" id="83333"/>
    <lineage>
        <taxon>Bacteria</taxon>
        <taxon>Pseudomonadati</taxon>
        <taxon>Pseudomonadota</taxon>
        <taxon>Gammaproteobacteria</taxon>
        <taxon>Enterobacterales</taxon>
        <taxon>Enterobacteriaceae</taxon>
        <taxon>Escherichia</taxon>
    </lineage>
</organism>
<evidence type="ECO:0000269" key="1">
    <source>
    </source>
</evidence>
<evidence type="ECO:0000269" key="2">
    <source>
    </source>
</evidence>
<evidence type="ECO:0000303" key="3">
    <source>
    </source>
</evidence>
<evidence type="ECO:0000303" key="4">
    <source>
    </source>
</evidence>
<evidence type="ECO:0000303" key="5">
    <source>
    </source>
</evidence>
<evidence type="ECO:0000305" key="6"/>